<evidence type="ECO:0000255" key="1">
    <source>
        <dbReference type="HAMAP-Rule" id="MF_00394"/>
    </source>
</evidence>
<accession>A7MQ75</accession>
<comment type="function">
    <text evidence="1">Catalyzes the reduction of the glycolytic intermediate dihydroxyacetone phosphate (DHAP) to sn-glycerol 3-phosphate (G3P), the key precursor for phospholipid synthesis.</text>
</comment>
<comment type="catalytic activity">
    <reaction evidence="1">
        <text>sn-glycerol 3-phosphate + NAD(+) = dihydroxyacetone phosphate + NADH + H(+)</text>
        <dbReference type="Rhea" id="RHEA:11092"/>
        <dbReference type="ChEBI" id="CHEBI:15378"/>
        <dbReference type="ChEBI" id="CHEBI:57540"/>
        <dbReference type="ChEBI" id="CHEBI:57597"/>
        <dbReference type="ChEBI" id="CHEBI:57642"/>
        <dbReference type="ChEBI" id="CHEBI:57945"/>
        <dbReference type="EC" id="1.1.1.94"/>
    </reaction>
    <physiologicalReaction direction="right-to-left" evidence="1">
        <dbReference type="Rhea" id="RHEA:11094"/>
    </physiologicalReaction>
</comment>
<comment type="catalytic activity">
    <reaction evidence="1">
        <text>sn-glycerol 3-phosphate + NADP(+) = dihydroxyacetone phosphate + NADPH + H(+)</text>
        <dbReference type="Rhea" id="RHEA:11096"/>
        <dbReference type="ChEBI" id="CHEBI:15378"/>
        <dbReference type="ChEBI" id="CHEBI:57597"/>
        <dbReference type="ChEBI" id="CHEBI:57642"/>
        <dbReference type="ChEBI" id="CHEBI:57783"/>
        <dbReference type="ChEBI" id="CHEBI:58349"/>
        <dbReference type="EC" id="1.1.1.94"/>
    </reaction>
    <physiologicalReaction direction="right-to-left" evidence="1">
        <dbReference type="Rhea" id="RHEA:11098"/>
    </physiologicalReaction>
</comment>
<comment type="pathway">
    <text evidence="1">Membrane lipid metabolism; glycerophospholipid metabolism.</text>
</comment>
<comment type="subcellular location">
    <subcellularLocation>
        <location evidence="1">Cytoplasm</location>
    </subcellularLocation>
</comment>
<comment type="similarity">
    <text evidence="1">Belongs to the NAD-dependent glycerol-3-phosphate dehydrogenase family.</text>
</comment>
<dbReference type="EC" id="1.1.1.94" evidence="1"/>
<dbReference type="EMBL" id="CP000783">
    <property type="protein sequence ID" value="ABU79300.1"/>
    <property type="molecule type" value="Genomic_DNA"/>
</dbReference>
<dbReference type="RefSeq" id="WP_004388494.1">
    <property type="nucleotide sequence ID" value="NC_009778.1"/>
</dbReference>
<dbReference type="SMR" id="A7MQ75"/>
<dbReference type="GeneID" id="56732753"/>
<dbReference type="KEGG" id="esa:ESA_04119"/>
<dbReference type="HOGENOM" id="CLU_033449_0_2_6"/>
<dbReference type="UniPathway" id="UPA00940"/>
<dbReference type="Proteomes" id="UP000000260">
    <property type="component" value="Chromosome"/>
</dbReference>
<dbReference type="GO" id="GO:0005829">
    <property type="term" value="C:cytosol"/>
    <property type="evidence" value="ECO:0007669"/>
    <property type="project" value="TreeGrafter"/>
</dbReference>
<dbReference type="GO" id="GO:0047952">
    <property type="term" value="F:glycerol-3-phosphate dehydrogenase [NAD(P)+] activity"/>
    <property type="evidence" value="ECO:0007669"/>
    <property type="project" value="UniProtKB-UniRule"/>
</dbReference>
<dbReference type="GO" id="GO:0051287">
    <property type="term" value="F:NAD binding"/>
    <property type="evidence" value="ECO:0007669"/>
    <property type="project" value="InterPro"/>
</dbReference>
<dbReference type="GO" id="GO:0005975">
    <property type="term" value="P:carbohydrate metabolic process"/>
    <property type="evidence" value="ECO:0007669"/>
    <property type="project" value="InterPro"/>
</dbReference>
<dbReference type="GO" id="GO:0046167">
    <property type="term" value="P:glycerol-3-phosphate biosynthetic process"/>
    <property type="evidence" value="ECO:0007669"/>
    <property type="project" value="UniProtKB-UniRule"/>
</dbReference>
<dbReference type="GO" id="GO:0046168">
    <property type="term" value="P:glycerol-3-phosphate catabolic process"/>
    <property type="evidence" value="ECO:0007669"/>
    <property type="project" value="InterPro"/>
</dbReference>
<dbReference type="GO" id="GO:0046474">
    <property type="term" value="P:glycerophospholipid biosynthetic process"/>
    <property type="evidence" value="ECO:0007669"/>
    <property type="project" value="TreeGrafter"/>
</dbReference>
<dbReference type="FunFam" id="1.10.1040.10:FF:000001">
    <property type="entry name" value="Glycerol-3-phosphate dehydrogenase [NAD(P)+]"/>
    <property type="match status" value="1"/>
</dbReference>
<dbReference type="FunFam" id="3.40.50.720:FF:000019">
    <property type="entry name" value="Glycerol-3-phosphate dehydrogenase [NAD(P)+]"/>
    <property type="match status" value="1"/>
</dbReference>
<dbReference type="Gene3D" id="1.10.1040.10">
    <property type="entry name" value="N-(1-d-carboxylethyl)-l-norvaline Dehydrogenase, domain 2"/>
    <property type="match status" value="1"/>
</dbReference>
<dbReference type="Gene3D" id="3.40.50.720">
    <property type="entry name" value="NAD(P)-binding Rossmann-like Domain"/>
    <property type="match status" value="1"/>
</dbReference>
<dbReference type="HAMAP" id="MF_00394">
    <property type="entry name" value="NAD_Glyc3P_dehydrog"/>
    <property type="match status" value="1"/>
</dbReference>
<dbReference type="InterPro" id="IPR008927">
    <property type="entry name" value="6-PGluconate_DH-like_C_sf"/>
</dbReference>
<dbReference type="InterPro" id="IPR013328">
    <property type="entry name" value="6PGD_dom2"/>
</dbReference>
<dbReference type="InterPro" id="IPR006168">
    <property type="entry name" value="G3P_DH_NAD-dep"/>
</dbReference>
<dbReference type="InterPro" id="IPR006109">
    <property type="entry name" value="G3P_DH_NAD-dep_C"/>
</dbReference>
<dbReference type="InterPro" id="IPR011128">
    <property type="entry name" value="G3P_DH_NAD-dep_N"/>
</dbReference>
<dbReference type="InterPro" id="IPR036291">
    <property type="entry name" value="NAD(P)-bd_dom_sf"/>
</dbReference>
<dbReference type="NCBIfam" id="NF000939">
    <property type="entry name" value="PRK00094.1-1"/>
    <property type="match status" value="1"/>
</dbReference>
<dbReference type="NCBIfam" id="NF000940">
    <property type="entry name" value="PRK00094.1-2"/>
    <property type="match status" value="1"/>
</dbReference>
<dbReference type="NCBIfam" id="NF000942">
    <property type="entry name" value="PRK00094.1-4"/>
    <property type="match status" value="1"/>
</dbReference>
<dbReference type="PANTHER" id="PTHR11728">
    <property type="entry name" value="GLYCEROL-3-PHOSPHATE DEHYDROGENASE"/>
    <property type="match status" value="1"/>
</dbReference>
<dbReference type="PANTHER" id="PTHR11728:SF1">
    <property type="entry name" value="GLYCEROL-3-PHOSPHATE DEHYDROGENASE [NAD(+)] 2, CHLOROPLASTIC"/>
    <property type="match status" value="1"/>
</dbReference>
<dbReference type="Pfam" id="PF07479">
    <property type="entry name" value="NAD_Gly3P_dh_C"/>
    <property type="match status" value="1"/>
</dbReference>
<dbReference type="Pfam" id="PF01210">
    <property type="entry name" value="NAD_Gly3P_dh_N"/>
    <property type="match status" value="1"/>
</dbReference>
<dbReference type="PIRSF" id="PIRSF000114">
    <property type="entry name" value="Glycerol-3-P_dh"/>
    <property type="match status" value="1"/>
</dbReference>
<dbReference type="PRINTS" id="PR00077">
    <property type="entry name" value="GPDHDRGNASE"/>
</dbReference>
<dbReference type="SUPFAM" id="SSF48179">
    <property type="entry name" value="6-phosphogluconate dehydrogenase C-terminal domain-like"/>
    <property type="match status" value="1"/>
</dbReference>
<dbReference type="SUPFAM" id="SSF51735">
    <property type="entry name" value="NAD(P)-binding Rossmann-fold domains"/>
    <property type="match status" value="1"/>
</dbReference>
<dbReference type="PROSITE" id="PS00957">
    <property type="entry name" value="NAD_G3PDH"/>
    <property type="match status" value="1"/>
</dbReference>
<keyword id="KW-0963">Cytoplasm</keyword>
<keyword id="KW-0444">Lipid biosynthesis</keyword>
<keyword id="KW-0443">Lipid metabolism</keyword>
<keyword id="KW-0520">NAD</keyword>
<keyword id="KW-0521">NADP</keyword>
<keyword id="KW-0547">Nucleotide-binding</keyword>
<keyword id="KW-0560">Oxidoreductase</keyword>
<keyword id="KW-0594">Phospholipid biosynthesis</keyword>
<keyword id="KW-1208">Phospholipid metabolism</keyword>
<keyword id="KW-1185">Reference proteome</keyword>
<reference key="1">
    <citation type="journal article" date="2010" name="PLoS ONE">
        <title>Genome sequence of Cronobacter sakazakii BAA-894 and comparative genomic hybridization analysis with other Cronobacter species.</title>
        <authorList>
            <person name="Kucerova E."/>
            <person name="Clifton S.W."/>
            <person name="Xia X.Q."/>
            <person name="Long F."/>
            <person name="Porwollik S."/>
            <person name="Fulton L."/>
            <person name="Fronick C."/>
            <person name="Minx P."/>
            <person name="Kyung K."/>
            <person name="Warren W."/>
            <person name="Fulton R."/>
            <person name="Feng D."/>
            <person name="Wollam A."/>
            <person name="Shah N."/>
            <person name="Bhonagiri V."/>
            <person name="Nash W.E."/>
            <person name="Hallsworth-Pepin K."/>
            <person name="Wilson R.K."/>
            <person name="McClelland M."/>
            <person name="Forsythe S.J."/>
        </authorList>
    </citation>
    <scope>NUCLEOTIDE SEQUENCE [LARGE SCALE GENOMIC DNA]</scope>
    <source>
        <strain>ATCC BAA-894</strain>
    </source>
</reference>
<protein>
    <recommendedName>
        <fullName evidence="1">Glycerol-3-phosphate dehydrogenase [NAD(P)+]</fullName>
        <ecNumber evidence="1">1.1.1.94</ecNumber>
    </recommendedName>
    <alternativeName>
        <fullName evidence="1">NAD(P)(+)-dependent glycerol-3-phosphate dehydrogenase</fullName>
    </alternativeName>
    <alternativeName>
        <fullName evidence="1">NAD(P)H-dependent dihydroxyacetone-phosphate reductase</fullName>
    </alternativeName>
</protein>
<proteinExistence type="inferred from homology"/>
<name>GPDA_CROS8</name>
<gene>
    <name evidence="1" type="primary">gpsA</name>
    <name type="ordered locus">ESA_04119</name>
</gene>
<organism>
    <name type="scientific">Cronobacter sakazakii (strain ATCC BAA-894)</name>
    <name type="common">Enterobacter sakazakii</name>
    <dbReference type="NCBI Taxonomy" id="290339"/>
    <lineage>
        <taxon>Bacteria</taxon>
        <taxon>Pseudomonadati</taxon>
        <taxon>Pseudomonadota</taxon>
        <taxon>Gammaproteobacteria</taxon>
        <taxon>Enterobacterales</taxon>
        <taxon>Enterobacteriaceae</taxon>
        <taxon>Cronobacter</taxon>
    </lineage>
</organism>
<sequence>MNTINASMTVIGAGSYGTALAITLARNGHHVVLWGHDPAHIATLQADRCNAAFLPDVPFPDTLHLESDLATALAASRNILVVVPSHVFGQVLRQIKPLMRPDARVVWATKGLEAETGRLLQDVAREALGDEIPLAVISGPTFAKELAAGLPTAISLAATDETFADDLQQLLHCGKSFRVYSNPDFIGVQLGGAVKNVIAIGAGMSDGIGFGANARTALITRGLAEMSRLGAALGADPTTFMGMAGLGDLVLTCTDNQSRNRRFGMMLGQGADVQSAQEKIGQVVEGYRNTKEVRELAARVGVEMPITEEIYQVLYCGKNAREAALTLLGRTRKDERSSQ</sequence>
<feature type="chain" id="PRO_1000049502" description="Glycerol-3-phosphate dehydrogenase [NAD(P)+]">
    <location>
        <begin position="1"/>
        <end position="339"/>
    </location>
</feature>
<feature type="active site" description="Proton acceptor" evidence="1">
    <location>
        <position position="195"/>
    </location>
</feature>
<feature type="binding site" evidence="1">
    <location>
        <position position="15"/>
    </location>
    <ligand>
        <name>NADPH</name>
        <dbReference type="ChEBI" id="CHEBI:57783"/>
    </ligand>
</feature>
<feature type="binding site" evidence="1">
    <location>
        <position position="16"/>
    </location>
    <ligand>
        <name>NADPH</name>
        <dbReference type="ChEBI" id="CHEBI:57783"/>
    </ligand>
</feature>
<feature type="binding site" evidence="1">
    <location>
        <position position="36"/>
    </location>
    <ligand>
        <name>NADPH</name>
        <dbReference type="ChEBI" id="CHEBI:57783"/>
    </ligand>
</feature>
<feature type="binding site" evidence="1">
    <location>
        <position position="110"/>
    </location>
    <ligand>
        <name>NADPH</name>
        <dbReference type="ChEBI" id="CHEBI:57783"/>
    </ligand>
</feature>
<feature type="binding site" evidence="1">
    <location>
        <position position="110"/>
    </location>
    <ligand>
        <name>sn-glycerol 3-phosphate</name>
        <dbReference type="ChEBI" id="CHEBI:57597"/>
    </ligand>
</feature>
<feature type="binding site" evidence="1">
    <location>
        <position position="139"/>
    </location>
    <ligand>
        <name>sn-glycerol 3-phosphate</name>
        <dbReference type="ChEBI" id="CHEBI:57597"/>
    </ligand>
</feature>
<feature type="binding site" evidence="1">
    <location>
        <position position="141"/>
    </location>
    <ligand>
        <name>sn-glycerol 3-phosphate</name>
        <dbReference type="ChEBI" id="CHEBI:57597"/>
    </ligand>
</feature>
<feature type="binding site" evidence="1">
    <location>
        <position position="143"/>
    </location>
    <ligand>
        <name>NADPH</name>
        <dbReference type="ChEBI" id="CHEBI:57783"/>
    </ligand>
</feature>
<feature type="binding site" evidence="1">
    <location>
        <position position="195"/>
    </location>
    <ligand>
        <name>sn-glycerol 3-phosphate</name>
        <dbReference type="ChEBI" id="CHEBI:57597"/>
    </ligand>
</feature>
<feature type="binding site" evidence="1">
    <location>
        <position position="248"/>
    </location>
    <ligand>
        <name>sn-glycerol 3-phosphate</name>
        <dbReference type="ChEBI" id="CHEBI:57597"/>
    </ligand>
</feature>
<feature type="binding site" evidence="1">
    <location>
        <position position="258"/>
    </location>
    <ligand>
        <name>sn-glycerol 3-phosphate</name>
        <dbReference type="ChEBI" id="CHEBI:57597"/>
    </ligand>
</feature>
<feature type="binding site" evidence="1">
    <location>
        <position position="259"/>
    </location>
    <ligand>
        <name>NADPH</name>
        <dbReference type="ChEBI" id="CHEBI:57783"/>
    </ligand>
</feature>
<feature type="binding site" evidence="1">
    <location>
        <position position="259"/>
    </location>
    <ligand>
        <name>sn-glycerol 3-phosphate</name>
        <dbReference type="ChEBI" id="CHEBI:57597"/>
    </ligand>
</feature>
<feature type="binding site" evidence="1">
    <location>
        <position position="260"/>
    </location>
    <ligand>
        <name>sn-glycerol 3-phosphate</name>
        <dbReference type="ChEBI" id="CHEBI:57597"/>
    </ligand>
</feature>
<feature type="binding site" evidence="1">
    <location>
        <position position="283"/>
    </location>
    <ligand>
        <name>NADPH</name>
        <dbReference type="ChEBI" id="CHEBI:57783"/>
    </ligand>
</feature>
<feature type="binding site" evidence="1">
    <location>
        <position position="285"/>
    </location>
    <ligand>
        <name>NADPH</name>
        <dbReference type="ChEBI" id="CHEBI:57783"/>
    </ligand>
</feature>